<organism>
    <name type="scientific">Saccharolobus islandicus (strain Y.N.15.51 / Yellowstone #2)</name>
    <name type="common">Sulfolobus islandicus</name>
    <dbReference type="NCBI Taxonomy" id="419942"/>
    <lineage>
        <taxon>Archaea</taxon>
        <taxon>Thermoproteota</taxon>
        <taxon>Thermoprotei</taxon>
        <taxon>Sulfolobales</taxon>
        <taxon>Sulfolobaceae</taxon>
        <taxon>Saccharolobus</taxon>
    </lineage>
</organism>
<protein>
    <recommendedName>
        <fullName evidence="1">Sirohydrochlorin cobaltochelatase</fullName>
        <ecNumber evidence="1">4.99.1.3</ecNumber>
    </recommendedName>
    <alternativeName>
        <fullName evidence="1">CbiXS</fullName>
    </alternativeName>
</protein>
<feature type="chain" id="PRO_1000212927" description="Sirohydrochlorin cobaltochelatase">
    <location>
        <begin position="1"/>
        <end position="128"/>
    </location>
</feature>
<feature type="active site" description="Proton acceptor" evidence="1">
    <location>
        <position position="9"/>
    </location>
</feature>
<feature type="binding site" evidence="1">
    <location>
        <position position="9"/>
    </location>
    <ligand>
        <name>Co(2+)</name>
        <dbReference type="ChEBI" id="CHEBI:48828"/>
    </ligand>
</feature>
<feature type="binding site" evidence="1">
    <location>
        <position position="43"/>
    </location>
    <ligand>
        <name>substrate</name>
    </ligand>
</feature>
<feature type="binding site" evidence="1">
    <location>
        <begin position="68"/>
        <end position="73"/>
    </location>
    <ligand>
        <name>substrate</name>
    </ligand>
</feature>
<feature type="binding site" evidence="1">
    <location>
        <position position="73"/>
    </location>
    <ligand>
        <name>Co(2+)</name>
        <dbReference type="ChEBI" id="CHEBI:48828"/>
    </ligand>
</feature>
<keyword id="KW-0169">Cobalamin biosynthesis</keyword>
<keyword id="KW-0170">Cobalt</keyword>
<keyword id="KW-0456">Lyase</keyword>
<keyword id="KW-0479">Metal-binding</keyword>
<name>CBIX_SACI1</name>
<sequence>MLGVLLVLHGSKIPEWKDVGIKYAEYLSRYFNLVEFGFLEFNKPTLSEALSNLLAKGANKIVVVPLLFATGTHFKRDIPRLLGIDGDEKKIQYMGKEIEIIIADPLGFDEKIGEVLVKRVNETYNKNY</sequence>
<accession>C3NGG2</accession>
<dbReference type="EC" id="4.99.1.3" evidence="1"/>
<dbReference type="EMBL" id="CP001404">
    <property type="protein sequence ID" value="ACP48222.1"/>
    <property type="molecule type" value="Genomic_DNA"/>
</dbReference>
<dbReference type="RefSeq" id="WP_012711674.1">
    <property type="nucleotide sequence ID" value="NC_012623.1"/>
</dbReference>
<dbReference type="SMR" id="C3NGG2"/>
<dbReference type="KEGG" id="sin:YN1551_1116"/>
<dbReference type="HOGENOM" id="CLU_065901_2_1_2"/>
<dbReference type="UniPathway" id="UPA00148">
    <property type="reaction ID" value="UER00223"/>
</dbReference>
<dbReference type="Proteomes" id="UP000006818">
    <property type="component" value="Chromosome"/>
</dbReference>
<dbReference type="GO" id="GO:0050897">
    <property type="term" value="F:cobalt ion binding"/>
    <property type="evidence" value="ECO:0007669"/>
    <property type="project" value="UniProtKB-UniRule"/>
</dbReference>
<dbReference type="GO" id="GO:0016852">
    <property type="term" value="F:sirohydrochlorin cobaltochelatase activity"/>
    <property type="evidence" value="ECO:0007669"/>
    <property type="project" value="UniProtKB-UniRule"/>
</dbReference>
<dbReference type="GO" id="GO:0019251">
    <property type="term" value="P:anaerobic cobalamin biosynthetic process"/>
    <property type="evidence" value="ECO:0007669"/>
    <property type="project" value="UniProtKB-UniRule"/>
</dbReference>
<dbReference type="CDD" id="cd03416">
    <property type="entry name" value="CbiX_SirB_N"/>
    <property type="match status" value="1"/>
</dbReference>
<dbReference type="Gene3D" id="3.40.50.1400">
    <property type="match status" value="1"/>
</dbReference>
<dbReference type="HAMAP" id="MF_00785">
    <property type="entry name" value="CbiX"/>
    <property type="match status" value="1"/>
</dbReference>
<dbReference type="InterPro" id="IPR002762">
    <property type="entry name" value="CbiX-like"/>
</dbReference>
<dbReference type="InterPro" id="IPR023652">
    <property type="entry name" value="SiroHydchlorin_Cochelatase"/>
</dbReference>
<dbReference type="InterPro" id="IPR050963">
    <property type="entry name" value="Sirohydro_Cobaltochel/CbiX"/>
</dbReference>
<dbReference type="PANTHER" id="PTHR33542">
    <property type="entry name" value="SIROHYDROCHLORIN FERROCHELATASE, CHLOROPLASTIC"/>
    <property type="match status" value="1"/>
</dbReference>
<dbReference type="PANTHER" id="PTHR33542:SF3">
    <property type="entry name" value="SIROHYDROCHLORIN FERROCHELATASE, CHLOROPLASTIC"/>
    <property type="match status" value="1"/>
</dbReference>
<dbReference type="Pfam" id="PF01903">
    <property type="entry name" value="CbiX"/>
    <property type="match status" value="1"/>
</dbReference>
<dbReference type="SUPFAM" id="SSF53800">
    <property type="entry name" value="Chelatase"/>
    <property type="match status" value="1"/>
</dbReference>
<evidence type="ECO:0000255" key="1">
    <source>
        <dbReference type="HAMAP-Rule" id="MF_00785"/>
    </source>
</evidence>
<comment type="function">
    <text evidence="1">Catalyzes the insertion of Co(2+) into sirohydrochlorin as part of the anaerobic pathway to cobalamin biosynthesis.</text>
</comment>
<comment type="catalytic activity">
    <reaction evidence="1">
        <text>Co-sirohydrochlorin + 2 H(+) = sirohydrochlorin + Co(2+)</text>
        <dbReference type="Rhea" id="RHEA:15893"/>
        <dbReference type="ChEBI" id="CHEBI:15378"/>
        <dbReference type="ChEBI" id="CHEBI:48828"/>
        <dbReference type="ChEBI" id="CHEBI:58351"/>
        <dbReference type="ChEBI" id="CHEBI:60049"/>
        <dbReference type="EC" id="4.99.1.3"/>
    </reaction>
</comment>
<comment type="pathway">
    <text evidence="1">Cofactor biosynthesis; adenosylcobalamin biosynthesis; cob(II)yrinate a,c-diamide from sirohydrochlorin (anaerobic route): step 1/10.</text>
</comment>
<comment type="subunit">
    <text evidence="1">Homotetramer; dimer of dimers.</text>
</comment>
<comment type="similarity">
    <text evidence="1">Belongs to the CbiX family. CbiXS subfamily.</text>
</comment>
<gene>
    <name evidence="1" type="primary">cbiX</name>
    <name type="ordered locus">YN1551_1116</name>
</gene>
<proteinExistence type="inferred from homology"/>
<reference key="1">
    <citation type="journal article" date="2009" name="Proc. Natl. Acad. Sci. U.S.A.">
        <title>Biogeography of the Sulfolobus islandicus pan-genome.</title>
        <authorList>
            <person name="Reno M.L."/>
            <person name="Held N.L."/>
            <person name="Fields C.J."/>
            <person name="Burke P.V."/>
            <person name="Whitaker R.J."/>
        </authorList>
    </citation>
    <scope>NUCLEOTIDE SEQUENCE [LARGE SCALE GENOMIC DNA]</scope>
    <source>
        <strain>Y.N.15.51 / Yellowstone #2</strain>
    </source>
</reference>